<dbReference type="EC" id="2.5.1.31" evidence="1"/>
<dbReference type="EMBL" id="AE016826">
    <property type="protein sequence ID" value="AAO26949.1"/>
    <property type="molecule type" value="Genomic_DNA"/>
</dbReference>
<dbReference type="RefSeq" id="WP_011091350.1">
    <property type="nucleotide sequence ID" value="NC_004545.1"/>
</dbReference>
<dbReference type="SMR" id="Q89AP0"/>
<dbReference type="STRING" id="224915.bbp_218"/>
<dbReference type="KEGG" id="bab:bbp_218"/>
<dbReference type="eggNOG" id="COG0020">
    <property type="taxonomic scope" value="Bacteria"/>
</dbReference>
<dbReference type="HOGENOM" id="CLU_038505_1_1_6"/>
<dbReference type="OrthoDB" id="4191603at2"/>
<dbReference type="Proteomes" id="UP000000601">
    <property type="component" value="Chromosome"/>
</dbReference>
<dbReference type="GO" id="GO:0005829">
    <property type="term" value="C:cytosol"/>
    <property type="evidence" value="ECO:0007669"/>
    <property type="project" value="TreeGrafter"/>
</dbReference>
<dbReference type="GO" id="GO:0008834">
    <property type="term" value="F:ditrans,polycis-undecaprenyl-diphosphate synthase [(2E,6E)-farnesyl-diphosphate specific] activity"/>
    <property type="evidence" value="ECO:0007669"/>
    <property type="project" value="UniProtKB-UniRule"/>
</dbReference>
<dbReference type="GO" id="GO:0000287">
    <property type="term" value="F:magnesium ion binding"/>
    <property type="evidence" value="ECO:0007669"/>
    <property type="project" value="UniProtKB-UniRule"/>
</dbReference>
<dbReference type="GO" id="GO:0071555">
    <property type="term" value="P:cell wall organization"/>
    <property type="evidence" value="ECO:0007669"/>
    <property type="project" value="UniProtKB-KW"/>
</dbReference>
<dbReference type="GO" id="GO:0009252">
    <property type="term" value="P:peptidoglycan biosynthetic process"/>
    <property type="evidence" value="ECO:0007669"/>
    <property type="project" value="UniProtKB-UniRule"/>
</dbReference>
<dbReference type="GO" id="GO:0016094">
    <property type="term" value="P:polyprenol biosynthetic process"/>
    <property type="evidence" value="ECO:0007669"/>
    <property type="project" value="TreeGrafter"/>
</dbReference>
<dbReference type="GO" id="GO:0008360">
    <property type="term" value="P:regulation of cell shape"/>
    <property type="evidence" value="ECO:0007669"/>
    <property type="project" value="UniProtKB-KW"/>
</dbReference>
<dbReference type="CDD" id="cd00475">
    <property type="entry name" value="Cis_IPPS"/>
    <property type="match status" value="1"/>
</dbReference>
<dbReference type="FunFam" id="3.40.1180.10:FF:000001">
    <property type="entry name" value="(2E,6E)-farnesyl-diphosphate-specific ditrans,polycis-undecaprenyl-diphosphate synthase"/>
    <property type="match status" value="1"/>
</dbReference>
<dbReference type="Gene3D" id="3.40.1180.10">
    <property type="entry name" value="Decaprenyl diphosphate synthase-like"/>
    <property type="match status" value="1"/>
</dbReference>
<dbReference type="HAMAP" id="MF_01139">
    <property type="entry name" value="ISPT"/>
    <property type="match status" value="1"/>
</dbReference>
<dbReference type="InterPro" id="IPR001441">
    <property type="entry name" value="UPP_synth-like"/>
</dbReference>
<dbReference type="InterPro" id="IPR018520">
    <property type="entry name" value="UPP_synth-like_CS"/>
</dbReference>
<dbReference type="InterPro" id="IPR036424">
    <property type="entry name" value="UPP_synth-like_sf"/>
</dbReference>
<dbReference type="NCBIfam" id="TIGR00055">
    <property type="entry name" value="uppS"/>
    <property type="match status" value="1"/>
</dbReference>
<dbReference type="PANTHER" id="PTHR10291:SF0">
    <property type="entry name" value="DEHYDRODOLICHYL DIPHOSPHATE SYNTHASE 2"/>
    <property type="match status" value="1"/>
</dbReference>
<dbReference type="PANTHER" id="PTHR10291">
    <property type="entry name" value="DEHYDRODOLICHYL DIPHOSPHATE SYNTHASE FAMILY MEMBER"/>
    <property type="match status" value="1"/>
</dbReference>
<dbReference type="Pfam" id="PF01255">
    <property type="entry name" value="Prenyltransf"/>
    <property type="match status" value="1"/>
</dbReference>
<dbReference type="SUPFAM" id="SSF64005">
    <property type="entry name" value="Undecaprenyl diphosphate synthase"/>
    <property type="match status" value="1"/>
</dbReference>
<dbReference type="PROSITE" id="PS01066">
    <property type="entry name" value="UPP_SYNTHASE"/>
    <property type="match status" value="1"/>
</dbReference>
<feature type="chain" id="PRO_0000123586" description="Ditrans,polycis-undecaprenyl-diphosphate synthase ((2E,6E)-farnesyl-diphosphate specific)">
    <location>
        <begin position="1"/>
        <end position="251"/>
    </location>
</feature>
<feature type="active site" evidence="1">
    <location>
        <position position="29"/>
    </location>
</feature>
<feature type="active site" description="Proton acceptor" evidence="1">
    <location>
        <position position="77"/>
    </location>
</feature>
<feature type="binding site" evidence="1">
    <location>
        <position position="29"/>
    </location>
    <ligand>
        <name>Mg(2+)</name>
        <dbReference type="ChEBI" id="CHEBI:18420"/>
    </ligand>
</feature>
<feature type="binding site" evidence="1">
    <location>
        <begin position="30"/>
        <end position="33"/>
    </location>
    <ligand>
        <name>substrate</name>
    </ligand>
</feature>
<feature type="binding site" evidence="1">
    <location>
        <position position="34"/>
    </location>
    <ligand>
        <name>substrate</name>
    </ligand>
</feature>
<feature type="binding site" evidence="1">
    <location>
        <position position="42"/>
    </location>
    <ligand>
        <name>substrate</name>
    </ligand>
</feature>
<feature type="binding site" evidence="1">
    <location>
        <position position="46"/>
    </location>
    <ligand>
        <name>substrate</name>
    </ligand>
</feature>
<feature type="binding site" evidence="1">
    <location>
        <begin position="74"/>
        <end position="76"/>
    </location>
    <ligand>
        <name>substrate</name>
    </ligand>
</feature>
<feature type="binding site" evidence="1">
    <location>
        <position position="78"/>
    </location>
    <ligand>
        <name>substrate</name>
    </ligand>
</feature>
<feature type="binding site" evidence="1">
    <location>
        <position position="80"/>
    </location>
    <ligand>
        <name>substrate</name>
    </ligand>
</feature>
<feature type="binding site" evidence="1">
    <location>
        <position position="197"/>
    </location>
    <ligand>
        <name>substrate</name>
    </ligand>
</feature>
<feature type="binding site" evidence="1">
    <location>
        <begin position="203"/>
        <end position="205"/>
    </location>
    <ligand>
        <name>substrate</name>
    </ligand>
</feature>
<feature type="binding site" evidence="1">
    <location>
        <position position="216"/>
    </location>
    <ligand>
        <name>Mg(2+)</name>
        <dbReference type="ChEBI" id="CHEBI:18420"/>
    </ligand>
</feature>
<name>UPPS_BUCBP</name>
<gene>
    <name evidence="1" type="primary">uppS</name>
    <name type="ordered locus">bbp_218</name>
</gene>
<accession>Q89AP0</accession>
<comment type="function">
    <text evidence="1">Catalyzes the sequential condensation of isopentenyl diphosphate (IPP) with (2E,6E)-farnesyl diphosphate (E,E-FPP) to yield (2Z,6Z,10Z,14Z,18Z,22Z,26Z,30Z,34E,38E)-undecaprenyl diphosphate (di-trans,octa-cis-UPP). UPP is the precursor of glycosyl carrier lipid in the biosynthesis of bacterial cell wall polysaccharide components such as peptidoglycan and lipopolysaccharide.</text>
</comment>
<comment type="catalytic activity">
    <reaction evidence="1">
        <text>8 isopentenyl diphosphate + (2E,6E)-farnesyl diphosphate = di-trans,octa-cis-undecaprenyl diphosphate + 8 diphosphate</text>
        <dbReference type="Rhea" id="RHEA:27551"/>
        <dbReference type="ChEBI" id="CHEBI:33019"/>
        <dbReference type="ChEBI" id="CHEBI:58405"/>
        <dbReference type="ChEBI" id="CHEBI:128769"/>
        <dbReference type="ChEBI" id="CHEBI:175763"/>
        <dbReference type="EC" id="2.5.1.31"/>
    </reaction>
</comment>
<comment type="cofactor">
    <cofactor evidence="1">
        <name>Mg(2+)</name>
        <dbReference type="ChEBI" id="CHEBI:18420"/>
    </cofactor>
    <text evidence="1">Binds 2 magnesium ions per subunit.</text>
</comment>
<comment type="subunit">
    <text evidence="1">Homodimer.</text>
</comment>
<comment type="similarity">
    <text evidence="1">Belongs to the UPP synthase family.</text>
</comment>
<protein>
    <recommendedName>
        <fullName evidence="1">Ditrans,polycis-undecaprenyl-diphosphate synthase ((2E,6E)-farnesyl-diphosphate specific)</fullName>
        <ecNumber evidence="1">2.5.1.31</ecNumber>
    </recommendedName>
    <alternativeName>
        <fullName evidence="1">Ditrans,polycis-undecaprenylcistransferase</fullName>
    </alternativeName>
    <alternativeName>
        <fullName evidence="1">Undecaprenyl diphosphate synthase</fullName>
        <shortName evidence="1">UDS</shortName>
    </alternativeName>
    <alternativeName>
        <fullName evidence="1">Undecaprenyl pyrophosphate synthase</fullName>
        <shortName evidence="1">UPP synthase</shortName>
    </alternativeName>
</protein>
<keyword id="KW-0133">Cell shape</keyword>
<keyword id="KW-0961">Cell wall biogenesis/degradation</keyword>
<keyword id="KW-0460">Magnesium</keyword>
<keyword id="KW-0479">Metal-binding</keyword>
<keyword id="KW-0573">Peptidoglycan synthesis</keyword>
<keyword id="KW-1185">Reference proteome</keyword>
<keyword id="KW-0808">Transferase</keyword>
<evidence type="ECO:0000255" key="1">
    <source>
        <dbReference type="HAMAP-Rule" id="MF_01139"/>
    </source>
</evidence>
<organism>
    <name type="scientific">Buchnera aphidicola subsp. Baizongia pistaciae (strain Bp)</name>
    <dbReference type="NCBI Taxonomy" id="224915"/>
    <lineage>
        <taxon>Bacteria</taxon>
        <taxon>Pseudomonadati</taxon>
        <taxon>Pseudomonadota</taxon>
        <taxon>Gammaproteobacteria</taxon>
        <taxon>Enterobacterales</taxon>
        <taxon>Erwiniaceae</taxon>
        <taxon>Buchnera</taxon>
    </lineage>
</organism>
<proteinExistence type="inferred from homology"/>
<sequence length="251" mass="29311">MSYSKNNMLFKNVLNFKKNIPSHVAIIMDGNGKWARKRGKSRFFGHFSGFYAARRAISFALFHKLKILTLYAFSSDNWNRSPREIKVLMELFFYALSNETNNLNKYNIRLKVIGNKEKFNTVLKNKIRVVEKETLKNTGLLLNIAANYSGRWEILEAIKKIVVAIKCKNLSLNAITESTVSDFLLINEKIPVDLVIRTGGECRLSNFLVWQISYSELYFTNTLWPDFDRKEFKKAIDEFSNRERRFGRVSH</sequence>
<reference key="1">
    <citation type="journal article" date="2003" name="Proc. Natl. Acad. Sci. U.S.A.">
        <title>Reductive genome evolution in Buchnera aphidicola.</title>
        <authorList>
            <person name="van Ham R.C.H.J."/>
            <person name="Kamerbeek J."/>
            <person name="Palacios C."/>
            <person name="Rausell C."/>
            <person name="Abascal F."/>
            <person name="Bastolla U."/>
            <person name="Fernandez J.M."/>
            <person name="Jimenez L."/>
            <person name="Postigo M."/>
            <person name="Silva F.J."/>
            <person name="Tamames J."/>
            <person name="Viguera E."/>
            <person name="Latorre A."/>
            <person name="Valencia A."/>
            <person name="Moran F."/>
            <person name="Moya A."/>
        </authorList>
    </citation>
    <scope>NUCLEOTIDE SEQUENCE [LARGE SCALE GENOMIC DNA]</scope>
    <source>
        <strain>Bp</strain>
    </source>
</reference>